<reference key="1">
    <citation type="journal article" date="2004" name="Nature">
        <title>Genome evolution in yeasts.</title>
        <authorList>
            <person name="Dujon B."/>
            <person name="Sherman D."/>
            <person name="Fischer G."/>
            <person name="Durrens P."/>
            <person name="Casaregola S."/>
            <person name="Lafontaine I."/>
            <person name="de Montigny J."/>
            <person name="Marck C."/>
            <person name="Neuveglise C."/>
            <person name="Talla E."/>
            <person name="Goffard N."/>
            <person name="Frangeul L."/>
            <person name="Aigle M."/>
            <person name="Anthouard V."/>
            <person name="Babour A."/>
            <person name="Barbe V."/>
            <person name="Barnay S."/>
            <person name="Blanchin S."/>
            <person name="Beckerich J.-M."/>
            <person name="Beyne E."/>
            <person name="Bleykasten C."/>
            <person name="Boisrame A."/>
            <person name="Boyer J."/>
            <person name="Cattolico L."/>
            <person name="Confanioleri F."/>
            <person name="de Daruvar A."/>
            <person name="Despons L."/>
            <person name="Fabre E."/>
            <person name="Fairhead C."/>
            <person name="Ferry-Dumazet H."/>
            <person name="Groppi A."/>
            <person name="Hantraye F."/>
            <person name="Hennequin C."/>
            <person name="Jauniaux N."/>
            <person name="Joyet P."/>
            <person name="Kachouri R."/>
            <person name="Kerrest A."/>
            <person name="Koszul R."/>
            <person name="Lemaire M."/>
            <person name="Lesur I."/>
            <person name="Ma L."/>
            <person name="Muller H."/>
            <person name="Nicaud J.-M."/>
            <person name="Nikolski M."/>
            <person name="Oztas S."/>
            <person name="Ozier-Kalogeropoulos O."/>
            <person name="Pellenz S."/>
            <person name="Potier S."/>
            <person name="Richard G.-F."/>
            <person name="Straub M.-L."/>
            <person name="Suleau A."/>
            <person name="Swennen D."/>
            <person name="Tekaia F."/>
            <person name="Wesolowski-Louvel M."/>
            <person name="Westhof E."/>
            <person name="Wirth B."/>
            <person name="Zeniou-Meyer M."/>
            <person name="Zivanovic Y."/>
            <person name="Bolotin-Fukuhara M."/>
            <person name="Thierry A."/>
            <person name="Bouchier C."/>
            <person name="Caudron B."/>
            <person name="Scarpelli C."/>
            <person name="Gaillardin C."/>
            <person name="Weissenbach J."/>
            <person name="Wincker P."/>
            <person name="Souciet J.-L."/>
        </authorList>
    </citation>
    <scope>NUCLEOTIDE SEQUENCE [LARGE SCALE GENOMIC DNA]</scope>
    <source>
        <strain>ATCC 8585 / CBS 2359 / DSM 70799 / NBRC 1267 / NRRL Y-1140 / WM37</strain>
    </source>
</reference>
<accession>Q6CJK6</accession>
<sequence length="228" mass="25236">MPLNAVRVASKAQPAKNVILVFHGLGDSGSGWSFLAEYLQRSPAFAHTRFVFPNAPNMRIDANGGMSMPAWFNIYDWANPDARVDVEGIKSSLKVINSFIQEQIDDGISPENIILGGFSQGAALTLASTVTSPYKLGGFFALSGFCRLKKEDLDSIAENKNKDTPVFHGHGDQDPIIPIQYGSDAKKFFEKYFHLSDYDFKSYRGMAHSTSLEEMQDLVQFLSKALKL</sequence>
<dbReference type="EC" id="3.1.2.-" evidence="2"/>
<dbReference type="EC" id="3.1.2.22" evidence="2"/>
<dbReference type="EMBL" id="CR382126">
    <property type="protein sequence ID" value="CAG98591.1"/>
    <property type="molecule type" value="Genomic_DNA"/>
</dbReference>
<dbReference type="RefSeq" id="XP_455883.1">
    <property type="nucleotide sequence ID" value="XM_455883.1"/>
</dbReference>
<dbReference type="SMR" id="Q6CJK6"/>
<dbReference type="FunCoup" id="Q6CJK6">
    <property type="interactions" value="492"/>
</dbReference>
<dbReference type="STRING" id="284590.Q6CJK6"/>
<dbReference type="ESTHER" id="klula-apth1">
    <property type="family name" value="LYsophospholipase_carboxylesterase"/>
</dbReference>
<dbReference type="PaxDb" id="284590-Q6CJK6"/>
<dbReference type="KEGG" id="kla:KLLA0_F17908g"/>
<dbReference type="eggNOG" id="KOG2112">
    <property type="taxonomic scope" value="Eukaryota"/>
</dbReference>
<dbReference type="HOGENOM" id="CLU_049413_3_3_1"/>
<dbReference type="InParanoid" id="Q6CJK6"/>
<dbReference type="OMA" id="WYDILAM"/>
<dbReference type="Proteomes" id="UP000000598">
    <property type="component" value="Chromosome F"/>
</dbReference>
<dbReference type="GO" id="GO:0005737">
    <property type="term" value="C:cytoplasm"/>
    <property type="evidence" value="ECO:0007669"/>
    <property type="project" value="UniProtKB-SubCell"/>
</dbReference>
<dbReference type="GO" id="GO:0005634">
    <property type="term" value="C:nucleus"/>
    <property type="evidence" value="ECO:0007669"/>
    <property type="project" value="UniProtKB-SubCell"/>
</dbReference>
<dbReference type="GO" id="GO:0052689">
    <property type="term" value="F:carboxylic ester hydrolase activity"/>
    <property type="evidence" value="ECO:0007669"/>
    <property type="project" value="UniProtKB-KW"/>
</dbReference>
<dbReference type="GO" id="GO:0008474">
    <property type="term" value="F:palmitoyl-(protein) hydrolase activity"/>
    <property type="evidence" value="ECO:0007669"/>
    <property type="project" value="TreeGrafter"/>
</dbReference>
<dbReference type="GO" id="GO:0006631">
    <property type="term" value="P:fatty acid metabolic process"/>
    <property type="evidence" value="ECO:0007669"/>
    <property type="project" value="UniProtKB-KW"/>
</dbReference>
<dbReference type="Gene3D" id="3.40.50.1820">
    <property type="entry name" value="alpha/beta hydrolase"/>
    <property type="match status" value="1"/>
</dbReference>
<dbReference type="InterPro" id="IPR029058">
    <property type="entry name" value="AB_hydrolase_fold"/>
</dbReference>
<dbReference type="InterPro" id="IPR050565">
    <property type="entry name" value="LYPA1-2/EST-like"/>
</dbReference>
<dbReference type="InterPro" id="IPR003140">
    <property type="entry name" value="PLipase/COase/thioEstase"/>
</dbReference>
<dbReference type="PANTHER" id="PTHR10655:SF17">
    <property type="entry name" value="LYSOPHOSPHOLIPASE-LIKE PROTEIN 1"/>
    <property type="match status" value="1"/>
</dbReference>
<dbReference type="PANTHER" id="PTHR10655">
    <property type="entry name" value="LYSOPHOSPHOLIPASE-RELATED"/>
    <property type="match status" value="1"/>
</dbReference>
<dbReference type="Pfam" id="PF02230">
    <property type="entry name" value="Abhydrolase_2"/>
    <property type="match status" value="1"/>
</dbReference>
<dbReference type="SUPFAM" id="SSF53474">
    <property type="entry name" value="alpha/beta-Hydrolases"/>
    <property type="match status" value="1"/>
</dbReference>
<gene>
    <name type="ordered locus">KLLA0F17908g</name>
</gene>
<protein>
    <recommendedName>
        <fullName>Acyl-protein thioesterase 1</fullName>
        <ecNumber evidence="2">3.1.2.-</ecNumber>
    </recommendedName>
    <alternativeName>
        <fullName>Palmitoyl-protein hydrolase</fullName>
        <ecNumber evidence="2">3.1.2.22</ecNumber>
    </alternativeName>
</protein>
<keyword id="KW-0963">Cytoplasm</keyword>
<keyword id="KW-0276">Fatty acid metabolism</keyword>
<keyword id="KW-0378">Hydrolase</keyword>
<keyword id="KW-0443">Lipid metabolism</keyword>
<keyword id="KW-0539">Nucleus</keyword>
<keyword id="KW-1185">Reference proteome</keyword>
<keyword id="KW-0719">Serine esterase</keyword>
<feature type="chain" id="PRO_0000229011" description="Acyl-protein thioesterase 1">
    <location>
        <begin position="1"/>
        <end position="228"/>
    </location>
</feature>
<feature type="active site" description="Charge relay system" evidence="1">
    <location>
        <position position="119"/>
    </location>
</feature>
<feature type="active site" description="Charge relay system" evidence="1">
    <location>
        <position position="174"/>
    </location>
</feature>
<feature type="active site" description="Charge relay system" evidence="1">
    <location>
        <position position="208"/>
    </location>
</feature>
<name>APTH1_KLULA</name>
<evidence type="ECO:0000250" key="1"/>
<evidence type="ECO:0000250" key="2">
    <source>
        <dbReference type="UniProtKB" id="Q12354"/>
    </source>
</evidence>
<evidence type="ECO:0000305" key="3"/>
<comment type="function">
    <text evidence="2">Hydrolyzes fatty acids from S-acylated cysteine residues in proteins with a strong preference for palmitoylated G-alpha proteins over other acyl substrates. Mediates the deacylation of G-alpha proteins such as GPA1 in vivo, but has weak or no activity toward palmitoylated Ras proteins. Has weak lysophospholipase activity in vitro; however such activity may not exist in vivo.</text>
</comment>
<comment type="catalytic activity">
    <reaction evidence="2">
        <text>S-hexadecanoyl-L-cysteinyl-[protein] + H2O = L-cysteinyl-[protein] + hexadecanoate + H(+)</text>
        <dbReference type="Rhea" id="RHEA:19233"/>
        <dbReference type="Rhea" id="RHEA-COMP:10131"/>
        <dbReference type="Rhea" id="RHEA-COMP:11032"/>
        <dbReference type="ChEBI" id="CHEBI:7896"/>
        <dbReference type="ChEBI" id="CHEBI:15377"/>
        <dbReference type="ChEBI" id="CHEBI:15378"/>
        <dbReference type="ChEBI" id="CHEBI:29950"/>
        <dbReference type="ChEBI" id="CHEBI:74151"/>
        <dbReference type="EC" id="3.1.2.22"/>
    </reaction>
</comment>
<comment type="subcellular location">
    <subcellularLocation>
        <location evidence="2">Cytoplasm</location>
    </subcellularLocation>
    <subcellularLocation>
        <location evidence="2">Nucleus</location>
    </subcellularLocation>
</comment>
<comment type="similarity">
    <text evidence="3">Belongs to the AB hydrolase superfamily. AB hydrolase 2 family.</text>
</comment>
<proteinExistence type="inferred from homology"/>
<organism>
    <name type="scientific">Kluyveromyces lactis (strain ATCC 8585 / CBS 2359 / DSM 70799 / NBRC 1267 / NRRL Y-1140 / WM37)</name>
    <name type="common">Yeast</name>
    <name type="synonym">Candida sphaerica</name>
    <dbReference type="NCBI Taxonomy" id="284590"/>
    <lineage>
        <taxon>Eukaryota</taxon>
        <taxon>Fungi</taxon>
        <taxon>Dikarya</taxon>
        <taxon>Ascomycota</taxon>
        <taxon>Saccharomycotina</taxon>
        <taxon>Saccharomycetes</taxon>
        <taxon>Saccharomycetales</taxon>
        <taxon>Saccharomycetaceae</taxon>
        <taxon>Kluyveromyces</taxon>
    </lineage>
</organism>